<proteinExistence type="inferred from homology"/>
<gene>
    <name evidence="1" type="primary">panD</name>
    <name type="ordered locus">Franean1_0199</name>
</gene>
<accession>A8LCM7</accession>
<feature type="chain" id="PRO_1000124823" description="Aspartate 1-decarboxylase beta chain" evidence="1">
    <location>
        <begin position="1"/>
        <end position="24"/>
    </location>
</feature>
<feature type="chain" id="PRO_1000124824" description="Aspartate 1-decarboxylase alpha chain" evidence="1">
    <location>
        <begin position="25"/>
        <end position="149"/>
    </location>
</feature>
<feature type="region of interest" description="Disordered" evidence="2">
    <location>
        <begin position="119"/>
        <end position="149"/>
    </location>
</feature>
<feature type="active site" description="Schiff-base intermediate with substrate; via pyruvic acid" evidence="1">
    <location>
        <position position="25"/>
    </location>
</feature>
<feature type="active site" description="Proton donor" evidence="1">
    <location>
        <position position="58"/>
    </location>
</feature>
<feature type="binding site" evidence="1">
    <location>
        <position position="57"/>
    </location>
    <ligand>
        <name>substrate</name>
    </ligand>
</feature>
<feature type="binding site" evidence="1">
    <location>
        <begin position="73"/>
        <end position="75"/>
    </location>
    <ligand>
        <name>substrate</name>
    </ligand>
</feature>
<feature type="modified residue" description="Pyruvic acid (Ser)" evidence="1">
    <location>
        <position position="25"/>
    </location>
</feature>
<keyword id="KW-0068">Autocatalytic cleavage</keyword>
<keyword id="KW-0963">Cytoplasm</keyword>
<keyword id="KW-0210">Decarboxylase</keyword>
<keyword id="KW-0456">Lyase</keyword>
<keyword id="KW-0566">Pantothenate biosynthesis</keyword>
<keyword id="KW-0670">Pyruvate</keyword>
<keyword id="KW-0704">Schiff base</keyword>
<keyword id="KW-0865">Zymogen</keyword>
<sequence>MFRTMLNSKIHRATVTQADLHYVGSVTIDADLMAAADLLPGEQVTIVDINNGARLETYAISGPAGSGIIGINGAAARLVHPGDLVIIISYGIMDDAEARRHVPKVLFVDAENRIVGQGGDPAAALPGDPSSLRGDVLDPAGARGLGGGA</sequence>
<comment type="function">
    <text evidence="1">Catalyzes the pyruvoyl-dependent decarboxylation of aspartate to produce beta-alanine.</text>
</comment>
<comment type="catalytic activity">
    <reaction evidence="1">
        <text>L-aspartate + H(+) = beta-alanine + CO2</text>
        <dbReference type="Rhea" id="RHEA:19497"/>
        <dbReference type="ChEBI" id="CHEBI:15378"/>
        <dbReference type="ChEBI" id="CHEBI:16526"/>
        <dbReference type="ChEBI" id="CHEBI:29991"/>
        <dbReference type="ChEBI" id="CHEBI:57966"/>
        <dbReference type="EC" id="4.1.1.11"/>
    </reaction>
</comment>
<comment type="cofactor">
    <cofactor evidence="1">
        <name>pyruvate</name>
        <dbReference type="ChEBI" id="CHEBI:15361"/>
    </cofactor>
    <text evidence="1">Binds 1 pyruvoyl group covalently per subunit.</text>
</comment>
<comment type="pathway">
    <text evidence="1">Cofactor biosynthesis; (R)-pantothenate biosynthesis; beta-alanine from L-aspartate: step 1/1.</text>
</comment>
<comment type="subunit">
    <text evidence="1">Heterooctamer of four alpha and four beta subunits.</text>
</comment>
<comment type="subcellular location">
    <subcellularLocation>
        <location evidence="1">Cytoplasm</location>
    </subcellularLocation>
</comment>
<comment type="PTM">
    <text evidence="1">Is synthesized initially as an inactive proenzyme, which is activated by self-cleavage at a specific serine bond to produce a beta-subunit with a hydroxyl group at its C-terminus and an alpha-subunit with a pyruvoyl group at its N-terminus.</text>
</comment>
<comment type="similarity">
    <text evidence="1">Belongs to the PanD family.</text>
</comment>
<organism>
    <name type="scientific">Parafrankia sp. (strain EAN1pec)</name>
    <dbReference type="NCBI Taxonomy" id="298653"/>
    <lineage>
        <taxon>Bacteria</taxon>
        <taxon>Bacillati</taxon>
        <taxon>Actinomycetota</taxon>
        <taxon>Actinomycetes</taxon>
        <taxon>Frankiales</taxon>
        <taxon>Frankiaceae</taxon>
        <taxon>Parafrankia</taxon>
    </lineage>
</organism>
<protein>
    <recommendedName>
        <fullName evidence="1">Aspartate 1-decarboxylase</fullName>
        <ecNumber evidence="1">4.1.1.11</ecNumber>
    </recommendedName>
    <alternativeName>
        <fullName evidence="1">Aspartate alpha-decarboxylase</fullName>
    </alternativeName>
    <component>
        <recommendedName>
            <fullName evidence="1">Aspartate 1-decarboxylase beta chain</fullName>
        </recommendedName>
    </component>
    <component>
        <recommendedName>
            <fullName evidence="1">Aspartate 1-decarboxylase alpha chain</fullName>
        </recommendedName>
    </component>
</protein>
<reference key="1">
    <citation type="journal article" date="2007" name="Genome Res.">
        <title>Genome characteristics of facultatively symbiotic Frankia sp. strains reflect host range and host plant biogeography.</title>
        <authorList>
            <person name="Normand P."/>
            <person name="Lapierre P."/>
            <person name="Tisa L.S."/>
            <person name="Gogarten J.P."/>
            <person name="Alloisio N."/>
            <person name="Bagnarol E."/>
            <person name="Bassi C.A."/>
            <person name="Berry A.M."/>
            <person name="Bickhart D.M."/>
            <person name="Choisne N."/>
            <person name="Couloux A."/>
            <person name="Cournoyer B."/>
            <person name="Cruveiller S."/>
            <person name="Daubin V."/>
            <person name="Demange N."/>
            <person name="Francino M.P."/>
            <person name="Goltsman E."/>
            <person name="Huang Y."/>
            <person name="Kopp O.R."/>
            <person name="Labarre L."/>
            <person name="Lapidus A."/>
            <person name="Lavire C."/>
            <person name="Marechal J."/>
            <person name="Martinez M."/>
            <person name="Mastronunzio J.E."/>
            <person name="Mullin B.C."/>
            <person name="Niemann J."/>
            <person name="Pujic P."/>
            <person name="Rawnsley T."/>
            <person name="Rouy Z."/>
            <person name="Schenowitz C."/>
            <person name="Sellstedt A."/>
            <person name="Tavares F."/>
            <person name="Tomkins J.P."/>
            <person name="Vallenet D."/>
            <person name="Valverde C."/>
            <person name="Wall L.G."/>
            <person name="Wang Y."/>
            <person name="Medigue C."/>
            <person name="Benson D.R."/>
        </authorList>
    </citation>
    <scope>NUCLEOTIDE SEQUENCE [LARGE SCALE GENOMIC DNA]</scope>
    <source>
        <strain>EAN1pec</strain>
    </source>
</reference>
<name>PAND_PARS2</name>
<dbReference type="EC" id="4.1.1.11" evidence="1"/>
<dbReference type="EMBL" id="CP000820">
    <property type="protein sequence ID" value="ABW09666.1"/>
    <property type="molecule type" value="Genomic_DNA"/>
</dbReference>
<dbReference type="RefSeq" id="WP_012157643.1">
    <property type="nucleotide sequence ID" value="NC_009921.1"/>
</dbReference>
<dbReference type="SMR" id="A8LCM7"/>
<dbReference type="STRING" id="298653.Franean1_0199"/>
<dbReference type="KEGG" id="fre:Franean1_0199"/>
<dbReference type="eggNOG" id="COG0853">
    <property type="taxonomic scope" value="Bacteria"/>
</dbReference>
<dbReference type="HOGENOM" id="CLU_115305_0_0_11"/>
<dbReference type="UniPathway" id="UPA00028">
    <property type="reaction ID" value="UER00002"/>
</dbReference>
<dbReference type="GO" id="GO:0005829">
    <property type="term" value="C:cytosol"/>
    <property type="evidence" value="ECO:0007669"/>
    <property type="project" value="TreeGrafter"/>
</dbReference>
<dbReference type="GO" id="GO:0004068">
    <property type="term" value="F:aspartate 1-decarboxylase activity"/>
    <property type="evidence" value="ECO:0007669"/>
    <property type="project" value="UniProtKB-UniRule"/>
</dbReference>
<dbReference type="GO" id="GO:0006523">
    <property type="term" value="P:alanine biosynthetic process"/>
    <property type="evidence" value="ECO:0007669"/>
    <property type="project" value="InterPro"/>
</dbReference>
<dbReference type="GO" id="GO:0015940">
    <property type="term" value="P:pantothenate biosynthetic process"/>
    <property type="evidence" value="ECO:0007669"/>
    <property type="project" value="UniProtKB-UniRule"/>
</dbReference>
<dbReference type="CDD" id="cd06919">
    <property type="entry name" value="Asp_decarbox"/>
    <property type="match status" value="1"/>
</dbReference>
<dbReference type="Gene3D" id="2.40.40.20">
    <property type="match status" value="1"/>
</dbReference>
<dbReference type="HAMAP" id="MF_00446">
    <property type="entry name" value="PanD"/>
    <property type="match status" value="1"/>
</dbReference>
<dbReference type="InterPro" id="IPR009010">
    <property type="entry name" value="Asp_de-COase-like_dom_sf"/>
</dbReference>
<dbReference type="InterPro" id="IPR003190">
    <property type="entry name" value="Asp_decarbox"/>
</dbReference>
<dbReference type="NCBIfam" id="TIGR00223">
    <property type="entry name" value="panD"/>
    <property type="match status" value="1"/>
</dbReference>
<dbReference type="PANTHER" id="PTHR21012">
    <property type="entry name" value="ASPARTATE 1-DECARBOXYLASE"/>
    <property type="match status" value="1"/>
</dbReference>
<dbReference type="PANTHER" id="PTHR21012:SF0">
    <property type="entry name" value="ASPARTATE 1-DECARBOXYLASE"/>
    <property type="match status" value="1"/>
</dbReference>
<dbReference type="Pfam" id="PF02261">
    <property type="entry name" value="Asp_decarbox"/>
    <property type="match status" value="1"/>
</dbReference>
<dbReference type="SUPFAM" id="SSF50692">
    <property type="entry name" value="ADC-like"/>
    <property type="match status" value="1"/>
</dbReference>
<evidence type="ECO:0000255" key="1">
    <source>
        <dbReference type="HAMAP-Rule" id="MF_00446"/>
    </source>
</evidence>
<evidence type="ECO:0000256" key="2">
    <source>
        <dbReference type="SAM" id="MobiDB-lite"/>
    </source>
</evidence>